<sequence length="123" mass="13568">MIQEQTMLNVADNSGARRVMCIKVLGGSHRRYAGVGDIIKITIKEAIPRGKVKKGDVLKAVVVRTKKGVRRPDGSVIRFDGNACVILNNNSEQPIGTRIFGPVTRELRNEKFMKIISLAPEVL</sequence>
<organism>
    <name type="scientific">Salmonella agona (strain SL483)</name>
    <dbReference type="NCBI Taxonomy" id="454166"/>
    <lineage>
        <taxon>Bacteria</taxon>
        <taxon>Pseudomonadati</taxon>
        <taxon>Pseudomonadota</taxon>
        <taxon>Gammaproteobacteria</taxon>
        <taxon>Enterobacterales</taxon>
        <taxon>Enterobacteriaceae</taxon>
        <taxon>Salmonella</taxon>
    </lineage>
</organism>
<feature type="chain" id="PRO_1000144321" description="Large ribosomal subunit protein uL14">
    <location>
        <begin position="1"/>
        <end position="123"/>
    </location>
</feature>
<keyword id="KW-0687">Ribonucleoprotein</keyword>
<keyword id="KW-0689">Ribosomal protein</keyword>
<keyword id="KW-0694">RNA-binding</keyword>
<keyword id="KW-0699">rRNA-binding</keyword>
<protein>
    <recommendedName>
        <fullName evidence="1">Large ribosomal subunit protein uL14</fullName>
    </recommendedName>
    <alternativeName>
        <fullName evidence="2">50S ribosomal protein L14</fullName>
    </alternativeName>
</protein>
<name>RL14_SALA4</name>
<dbReference type="EMBL" id="CP001138">
    <property type="protein sequence ID" value="ACH51281.1"/>
    <property type="molecule type" value="Genomic_DNA"/>
</dbReference>
<dbReference type="RefSeq" id="WP_000613954.1">
    <property type="nucleotide sequence ID" value="NC_011149.1"/>
</dbReference>
<dbReference type="SMR" id="B5F7T5"/>
<dbReference type="GeneID" id="98390432"/>
<dbReference type="KEGG" id="sea:SeAg_B3626"/>
<dbReference type="HOGENOM" id="CLU_095071_2_1_6"/>
<dbReference type="Proteomes" id="UP000008819">
    <property type="component" value="Chromosome"/>
</dbReference>
<dbReference type="GO" id="GO:0022625">
    <property type="term" value="C:cytosolic large ribosomal subunit"/>
    <property type="evidence" value="ECO:0007669"/>
    <property type="project" value="TreeGrafter"/>
</dbReference>
<dbReference type="GO" id="GO:0070180">
    <property type="term" value="F:large ribosomal subunit rRNA binding"/>
    <property type="evidence" value="ECO:0007669"/>
    <property type="project" value="TreeGrafter"/>
</dbReference>
<dbReference type="GO" id="GO:0003735">
    <property type="term" value="F:structural constituent of ribosome"/>
    <property type="evidence" value="ECO:0007669"/>
    <property type="project" value="InterPro"/>
</dbReference>
<dbReference type="GO" id="GO:0006412">
    <property type="term" value="P:translation"/>
    <property type="evidence" value="ECO:0007669"/>
    <property type="project" value="UniProtKB-UniRule"/>
</dbReference>
<dbReference type="CDD" id="cd00337">
    <property type="entry name" value="Ribosomal_uL14"/>
    <property type="match status" value="1"/>
</dbReference>
<dbReference type="FunFam" id="2.40.150.20:FF:000001">
    <property type="entry name" value="50S ribosomal protein L14"/>
    <property type="match status" value="1"/>
</dbReference>
<dbReference type="Gene3D" id="2.40.150.20">
    <property type="entry name" value="Ribosomal protein L14"/>
    <property type="match status" value="1"/>
</dbReference>
<dbReference type="HAMAP" id="MF_01367">
    <property type="entry name" value="Ribosomal_uL14"/>
    <property type="match status" value="1"/>
</dbReference>
<dbReference type="InterPro" id="IPR000218">
    <property type="entry name" value="Ribosomal_uL14"/>
</dbReference>
<dbReference type="InterPro" id="IPR005745">
    <property type="entry name" value="Ribosomal_uL14_bac-type"/>
</dbReference>
<dbReference type="InterPro" id="IPR019972">
    <property type="entry name" value="Ribosomal_uL14_CS"/>
</dbReference>
<dbReference type="InterPro" id="IPR036853">
    <property type="entry name" value="Ribosomal_uL14_sf"/>
</dbReference>
<dbReference type="NCBIfam" id="TIGR01067">
    <property type="entry name" value="rplN_bact"/>
    <property type="match status" value="1"/>
</dbReference>
<dbReference type="PANTHER" id="PTHR11761">
    <property type="entry name" value="50S/60S RIBOSOMAL PROTEIN L14/L23"/>
    <property type="match status" value="1"/>
</dbReference>
<dbReference type="PANTHER" id="PTHR11761:SF3">
    <property type="entry name" value="LARGE RIBOSOMAL SUBUNIT PROTEIN UL14M"/>
    <property type="match status" value="1"/>
</dbReference>
<dbReference type="Pfam" id="PF00238">
    <property type="entry name" value="Ribosomal_L14"/>
    <property type="match status" value="1"/>
</dbReference>
<dbReference type="SMART" id="SM01374">
    <property type="entry name" value="Ribosomal_L14"/>
    <property type="match status" value="1"/>
</dbReference>
<dbReference type="SUPFAM" id="SSF50193">
    <property type="entry name" value="Ribosomal protein L14"/>
    <property type="match status" value="1"/>
</dbReference>
<dbReference type="PROSITE" id="PS00049">
    <property type="entry name" value="RIBOSOMAL_L14"/>
    <property type="match status" value="1"/>
</dbReference>
<reference key="1">
    <citation type="journal article" date="2011" name="J. Bacteriol.">
        <title>Comparative genomics of 28 Salmonella enterica isolates: evidence for CRISPR-mediated adaptive sublineage evolution.</title>
        <authorList>
            <person name="Fricke W.F."/>
            <person name="Mammel M.K."/>
            <person name="McDermott P.F."/>
            <person name="Tartera C."/>
            <person name="White D.G."/>
            <person name="Leclerc J.E."/>
            <person name="Ravel J."/>
            <person name="Cebula T.A."/>
        </authorList>
    </citation>
    <scope>NUCLEOTIDE SEQUENCE [LARGE SCALE GENOMIC DNA]</scope>
    <source>
        <strain>SL483</strain>
    </source>
</reference>
<comment type="function">
    <text evidence="1">Binds to 23S rRNA. Forms part of two intersubunit bridges in the 70S ribosome.</text>
</comment>
<comment type="subunit">
    <text evidence="1">Part of the 50S ribosomal subunit. Forms a cluster with proteins L3 and L19. In the 70S ribosome, L14 and L19 interact and together make contacts with the 16S rRNA in bridges B5 and B8.</text>
</comment>
<comment type="similarity">
    <text evidence="1">Belongs to the universal ribosomal protein uL14 family.</text>
</comment>
<evidence type="ECO:0000255" key="1">
    <source>
        <dbReference type="HAMAP-Rule" id="MF_01367"/>
    </source>
</evidence>
<evidence type="ECO:0000305" key="2"/>
<accession>B5F7T5</accession>
<gene>
    <name evidence="1" type="primary">rplN</name>
    <name type="ordered locus">SeAg_B3626</name>
</gene>
<proteinExistence type="inferred from homology"/>